<gene>
    <name evidence="1" type="primary">pheS</name>
    <name type="ordered locus">Jann_0452</name>
</gene>
<feature type="chain" id="PRO_1000006844" description="Phenylalanine--tRNA ligase alpha subunit">
    <location>
        <begin position="1"/>
        <end position="357"/>
    </location>
</feature>
<feature type="binding site" evidence="1">
    <location>
        <position position="259"/>
    </location>
    <ligand>
        <name>Mg(2+)</name>
        <dbReference type="ChEBI" id="CHEBI:18420"/>
        <note>shared with beta subunit</note>
    </ligand>
</feature>
<evidence type="ECO:0000255" key="1">
    <source>
        <dbReference type="HAMAP-Rule" id="MF_00281"/>
    </source>
</evidence>
<reference key="1">
    <citation type="submission" date="2006-02" db="EMBL/GenBank/DDBJ databases">
        <title>Complete sequence of chromosome of Jannaschia sp. CCS1.</title>
        <authorList>
            <consortium name="US DOE Joint Genome Institute"/>
            <person name="Copeland A."/>
            <person name="Lucas S."/>
            <person name="Lapidus A."/>
            <person name="Barry K."/>
            <person name="Detter J.C."/>
            <person name="Glavina del Rio T."/>
            <person name="Hammon N."/>
            <person name="Israni S."/>
            <person name="Pitluck S."/>
            <person name="Brettin T."/>
            <person name="Bruce D."/>
            <person name="Han C."/>
            <person name="Tapia R."/>
            <person name="Gilna P."/>
            <person name="Chertkov O."/>
            <person name="Saunders E."/>
            <person name="Schmutz J."/>
            <person name="Larimer F."/>
            <person name="Land M."/>
            <person name="Kyrpides N."/>
            <person name="Lykidis A."/>
            <person name="Moran M.A."/>
            <person name="Belas R."/>
            <person name="Ye W."/>
            <person name="Buchan A."/>
            <person name="Gonzalez J.M."/>
            <person name="Schell M.A."/>
            <person name="Richardson P."/>
        </authorList>
    </citation>
    <scope>NUCLEOTIDE SEQUENCE [LARGE SCALE GENOMIC DNA]</scope>
    <source>
        <strain>CCS1</strain>
    </source>
</reference>
<proteinExistence type="inferred from homology"/>
<comment type="catalytic activity">
    <reaction evidence="1">
        <text>tRNA(Phe) + L-phenylalanine + ATP = L-phenylalanyl-tRNA(Phe) + AMP + diphosphate + H(+)</text>
        <dbReference type="Rhea" id="RHEA:19413"/>
        <dbReference type="Rhea" id="RHEA-COMP:9668"/>
        <dbReference type="Rhea" id="RHEA-COMP:9699"/>
        <dbReference type="ChEBI" id="CHEBI:15378"/>
        <dbReference type="ChEBI" id="CHEBI:30616"/>
        <dbReference type="ChEBI" id="CHEBI:33019"/>
        <dbReference type="ChEBI" id="CHEBI:58095"/>
        <dbReference type="ChEBI" id="CHEBI:78442"/>
        <dbReference type="ChEBI" id="CHEBI:78531"/>
        <dbReference type="ChEBI" id="CHEBI:456215"/>
        <dbReference type="EC" id="6.1.1.20"/>
    </reaction>
</comment>
<comment type="cofactor">
    <cofactor evidence="1">
        <name>Mg(2+)</name>
        <dbReference type="ChEBI" id="CHEBI:18420"/>
    </cofactor>
    <text evidence="1">Binds 2 magnesium ions per tetramer.</text>
</comment>
<comment type="subunit">
    <text evidence="1">Tetramer of two alpha and two beta subunits.</text>
</comment>
<comment type="subcellular location">
    <subcellularLocation>
        <location evidence="1">Cytoplasm</location>
    </subcellularLocation>
</comment>
<comment type="similarity">
    <text evidence="1">Belongs to the class-II aminoacyl-tRNA synthetase family. Phe-tRNA synthetase alpha subunit type 1 subfamily.</text>
</comment>
<accession>Q28V93</accession>
<protein>
    <recommendedName>
        <fullName evidence="1">Phenylalanine--tRNA ligase alpha subunit</fullName>
        <ecNumber evidence="1">6.1.1.20</ecNumber>
    </recommendedName>
    <alternativeName>
        <fullName evidence="1">Phenylalanyl-tRNA synthetase alpha subunit</fullName>
        <shortName evidence="1">PheRS</shortName>
    </alternativeName>
</protein>
<sequence length="357" mass="39512">MDGLNDLRAGWLDRIGGATDEATLEEFRVAALGKKGEISLKMRELGKMTPEERQVAGPALNALKDEVNAAIAAKKAGLADAALDERLKAEWLDVTLPARPKRVGSIHPVSQVTEEVTAIFADMGFSVAEGPQIETDFYNFDALNIPGHHPARAEMDTFYTHRAEGDNRPPHVLRTHTSPVQIRHMEKHGAPCRIIAPGRVYRADYDQTHTPMFHQVEGLVLGRDVSMANLKWVLEEFYSAFFGVQVKTRFRASHFPFVEPGAEVDIQCSFEGGTVKVGEGDDWLEILGSGMVHPKVLEAGGIDPQEFQGFAFGMGIDRIAMLKYGIPDLRDFFASDLRWLRHYGFASLEMPSVHAGD</sequence>
<organism>
    <name type="scientific">Jannaschia sp. (strain CCS1)</name>
    <dbReference type="NCBI Taxonomy" id="290400"/>
    <lineage>
        <taxon>Bacteria</taxon>
        <taxon>Pseudomonadati</taxon>
        <taxon>Pseudomonadota</taxon>
        <taxon>Alphaproteobacteria</taxon>
        <taxon>Rhodobacterales</taxon>
        <taxon>Roseobacteraceae</taxon>
        <taxon>Jannaschia</taxon>
    </lineage>
</organism>
<keyword id="KW-0030">Aminoacyl-tRNA synthetase</keyword>
<keyword id="KW-0067">ATP-binding</keyword>
<keyword id="KW-0963">Cytoplasm</keyword>
<keyword id="KW-0436">Ligase</keyword>
<keyword id="KW-0460">Magnesium</keyword>
<keyword id="KW-0479">Metal-binding</keyword>
<keyword id="KW-0547">Nucleotide-binding</keyword>
<keyword id="KW-0648">Protein biosynthesis</keyword>
<keyword id="KW-1185">Reference proteome</keyword>
<dbReference type="EC" id="6.1.1.20" evidence="1"/>
<dbReference type="EMBL" id="CP000264">
    <property type="protein sequence ID" value="ABD53369.1"/>
    <property type="molecule type" value="Genomic_DNA"/>
</dbReference>
<dbReference type="RefSeq" id="WP_011453578.1">
    <property type="nucleotide sequence ID" value="NC_007802.1"/>
</dbReference>
<dbReference type="SMR" id="Q28V93"/>
<dbReference type="STRING" id="290400.Jann_0452"/>
<dbReference type="KEGG" id="jan:Jann_0452"/>
<dbReference type="eggNOG" id="COG0016">
    <property type="taxonomic scope" value="Bacteria"/>
</dbReference>
<dbReference type="HOGENOM" id="CLU_025086_0_1_5"/>
<dbReference type="Proteomes" id="UP000008326">
    <property type="component" value="Chromosome"/>
</dbReference>
<dbReference type="GO" id="GO:0005737">
    <property type="term" value="C:cytoplasm"/>
    <property type="evidence" value="ECO:0007669"/>
    <property type="project" value="UniProtKB-SubCell"/>
</dbReference>
<dbReference type="GO" id="GO:0005524">
    <property type="term" value="F:ATP binding"/>
    <property type="evidence" value="ECO:0007669"/>
    <property type="project" value="UniProtKB-UniRule"/>
</dbReference>
<dbReference type="GO" id="GO:0000287">
    <property type="term" value="F:magnesium ion binding"/>
    <property type="evidence" value="ECO:0007669"/>
    <property type="project" value="UniProtKB-UniRule"/>
</dbReference>
<dbReference type="GO" id="GO:0004826">
    <property type="term" value="F:phenylalanine-tRNA ligase activity"/>
    <property type="evidence" value="ECO:0007669"/>
    <property type="project" value="UniProtKB-UniRule"/>
</dbReference>
<dbReference type="GO" id="GO:0000049">
    <property type="term" value="F:tRNA binding"/>
    <property type="evidence" value="ECO:0007669"/>
    <property type="project" value="InterPro"/>
</dbReference>
<dbReference type="GO" id="GO:0006432">
    <property type="term" value="P:phenylalanyl-tRNA aminoacylation"/>
    <property type="evidence" value="ECO:0007669"/>
    <property type="project" value="UniProtKB-UniRule"/>
</dbReference>
<dbReference type="CDD" id="cd00496">
    <property type="entry name" value="PheRS_alpha_core"/>
    <property type="match status" value="1"/>
</dbReference>
<dbReference type="FunFam" id="3.30.930.10:FF:000003">
    <property type="entry name" value="Phenylalanine--tRNA ligase alpha subunit"/>
    <property type="match status" value="1"/>
</dbReference>
<dbReference type="Gene3D" id="3.30.930.10">
    <property type="entry name" value="Bira Bifunctional Protein, Domain 2"/>
    <property type="match status" value="1"/>
</dbReference>
<dbReference type="HAMAP" id="MF_00281">
    <property type="entry name" value="Phe_tRNA_synth_alpha1"/>
    <property type="match status" value="1"/>
</dbReference>
<dbReference type="InterPro" id="IPR006195">
    <property type="entry name" value="aa-tRNA-synth_II"/>
</dbReference>
<dbReference type="InterPro" id="IPR045864">
    <property type="entry name" value="aa-tRNA-synth_II/BPL/LPL"/>
</dbReference>
<dbReference type="InterPro" id="IPR004529">
    <property type="entry name" value="Phe-tRNA-synth_IIc_asu"/>
</dbReference>
<dbReference type="InterPro" id="IPR004188">
    <property type="entry name" value="Phe-tRNA_ligase_II_N"/>
</dbReference>
<dbReference type="InterPro" id="IPR022911">
    <property type="entry name" value="Phe_tRNA_ligase_alpha1_bac"/>
</dbReference>
<dbReference type="InterPro" id="IPR002319">
    <property type="entry name" value="Phenylalanyl-tRNA_Synthase"/>
</dbReference>
<dbReference type="InterPro" id="IPR010978">
    <property type="entry name" value="tRNA-bd_arm"/>
</dbReference>
<dbReference type="NCBIfam" id="TIGR00468">
    <property type="entry name" value="pheS"/>
    <property type="match status" value="1"/>
</dbReference>
<dbReference type="PANTHER" id="PTHR11538:SF41">
    <property type="entry name" value="PHENYLALANINE--TRNA LIGASE, MITOCHONDRIAL"/>
    <property type="match status" value="1"/>
</dbReference>
<dbReference type="PANTHER" id="PTHR11538">
    <property type="entry name" value="PHENYLALANYL-TRNA SYNTHETASE"/>
    <property type="match status" value="1"/>
</dbReference>
<dbReference type="Pfam" id="PF02912">
    <property type="entry name" value="Phe_tRNA-synt_N"/>
    <property type="match status" value="1"/>
</dbReference>
<dbReference type="Pfam" id="PF01409">
    <property type="entry name" value="tRNA-synt_2d"/>
    <property type="match status" value="1"/>
</dbReference>
<dbReference type="SUPFAM" id="SSF55681">
    <property type="entry name" value="Class II aaRS and biotin synthetases"/>
    <property type="match status" value="1"/>
</dbReference>
<dbReference type="SUPFAM" id="SSF46589">
    <property type="entry name" value="tRNA-binding arm"/>
    <property type="match status" value="1"/>
</dbReference>
<dbReference type="PROSITE" id="PS50862">
    <property type="entry name" value="AA_TRNA_LIGASE_II"/>
    <property type="match status" value="1"/>
</dbReference>
<name>SYFA_JANSC</name>